<gene>
    <name evidence="1" type="primary">hemC</name>
    <name type="ordered locus">BPUM_2456</name>
</gene>
<dbReference type="EC" id="2.5.1.61" evidence="1"/>
<dbReference type="EMBL" id="CP000813">
    <property type="protein sequence ID" value="ABV63119.1"/>
    <property type="molecule type" value="Genomic_DNA"/>
</dbReference>
<dbReference type="RefSeq" id="WP_012010778.1">
    <property type="nucleotide sequence ID" value="NZ_VEIS01000010.1"/>
</dbReference>
<dbReference type="SMR" id="A8FFV2"/>
<dbReference type="STRING" id="315750.BPUM_2456"/>
<dbReference type="GeneID" id="5621720"/>
<dbReference type="KEGG" id="bpu:BPUM_2456"/>
<dbReference type="eggNOG" id="COG0181">
    <property type="taxonomic scope" value="Bacteria"/>
</dbReference>
<dbReference type="HOGENOM" id="CLU_019704_0_2_9"/>
<dbReference type="OrthoDB" id="9810298at2"/>
<dbReference type="UniPathway" id="UPA00251">
    <property type="reaction ID" value="UER00319"/>
</dbReference>
<dbReference type="Proteomes" id="UP000001355">
    <property type="component" value="Chromosome"/>
</dbReference>
<dbReference type="GO" id="GO:0005737">
    <property type="term" value="C:cytoplasm"/>
    <property type="evidence" value="ECO:0007669"/>
    <property type="project" value="TreeGrafter"/>
</dbReference>
<dbReference type="GO" id="GO:0004418">
    <property type="term" value="F:hydroxymethylbilane synthase activity"/>
    <property type="evidence" value="ECO:0007669"/>
    <property type="project" value="UniProtKB-UniRule"/>
</dbReference>
<dbReference type="GO" id="GO:0006782">
    <property type="term" value="P:protoporphyrinogen IX biosynthetic process"/>
    <property type="evidence" value="ECO:0007669"/>
    <property type="project" value="UniProtKB-UniRule"/>
</dbReference>
<dbReference type="CDD" id="cd13646">
    <property type="entry name" value="PBP2_EcHMBS_like"/>
    <property type="match status" value="1"/>
</dbReference>
<dbReference type="FunFam" id="3.30.160.40:FF:000001">
    <property type="entry name" value="Porphobilinogen deaminase"/>
    <property type="match status" value="1"/>
</dbReference>
<dbReference type="FunFam" id="3.40.190.10:FF:000004">
    <property type="entry name" value="Porphobilinogen deaminase"/>
    <property type="match status" value="1"/>
</dbReference>
<dbReference type="FunFam" id="3.40.190.10:FF:000005">
    <property type="entry name" value="Porphobilinogen deaminase"/>
    <property type="match status" value="1"/>
</dbReference>
<dbReference type="Gene3D" id="3.40.190.10">
    <property type="entry name" value="Periplasmic binding protein-like II"/>
    <property type="match status" value="2"/>
</dbReference>
<dbReference type="Gene3D" id="3.30.160.40">
    <property type="entry name" value="Porphobilinogen deaminase, C-terminal domain"/>
    <property type="match status" value="1"/>
</dbReference>
<dbReference type="HAMAP" id="MF_00260">
    <property type="entry name" value="Porphobil_deam"/>
    <property type="match status" value="1"/>
</dbReference>
<dbReference type="InterPro" id="IPR000860">
    <property type="entry name" value="HemC"/>
</dbReference>
<dbReference type="InterPro" id="IPR022419">
    <property type="entry name" value="Porphobilin_deaminase_cofac_BS"/>
</dbReference>
<dbReference type="InterPro" id="IPR022417">
    <property type="entry name" value="Porphobilin_deaminase_N"/>
</dbReference>
<dbReference type="InterPro" id="IPR022418">
    <property type="entry name" value="Porphobilinogen_deaminase_C"/>
</dbReference>
<dbReference type="InterPro" id="IPR036803">
    <property type="entry name" value="Porphobilinogen_deaminase_C_sf"/>
</dbReference>
<dbReference type="NCBIfam" id="TIGR00212">
    <property type="entry name" value="hemC"/>
    <property type="match status" value="1"/>
</dbReference>
<dbReference type="PANTHER" id="PTHR11557">
    <property type="entry name" value="PORPHOBILINOGEN DEAMINASE"/>
    <property type="match status" value="1"/>
</dbReference>
<dbReference type="PANTHER" id="PTHR11557:SF0">
    <property type="entry name" value="PORPHOBILINOGEN DEAMINASE"/>
    <property type="match status" value="1"/>
</dbReference>
<dbReference type="Pfam" id="PF01379">
    <property type="entry name" value="Porphobil_deam"/>
    <property type="match status" value="1"/>
</dbReference>
<dbReference type="Pfam" id="PF03900">
    <property type="entry name" value="Porphobil_deamC"/>
    <property type="match status" value="1"/>
</dbReference>
<dbReference type="PIRSF" id="PIRSF001438">
    <property type="entry name" value="4pyrrol_synth_OHMeBilane_synth"/>
    <property type="match status" value="1"/>
</dbReference>
<dbReference type="PRINTS" id="PR00151">
    <property type="entry name" value="PORPHBDMNASE"/>
</dbReference>
<dbReference type="SUPFAM" id="SSF53850">
    <property type="entry name" value="Periplasmic binding protein-like II"/>
    <property type="match status" value="1"/>
</dbReference>
<dbReference type="SUPFAM" id="SSF54782">
    <property type="entry name" value="Porphobilinogen deaminase (hydroxymethylbilane synthase), C-terminal domain"/>
    <property type="match status" value="1"/>
</dbReference>
<dbReference type="PROSITE" id="PS00533">
    <property type="entry name" value="PORPHOBILINOGEN_DEAM"/>
    <property type="match status" value="1"/>
</dbReference>
<comment type="function">
    <text evidence="1">Tetrapolymerization of the monopyrrole PBG into the hydroxymethylbilane pre-uroporphyrinogen in several discrete steps.</text>
</comment>
<comment type="catalytic activity">
    <reaction evidence="1">
        <text>4 porphobilinogen + H2O = hydroxymethylbilane + 4 NH4(+)</text>
        <dbReference type="Rhea" id="RHEA:13185"/>
        <dbReference type="ChEBI" id="CHEBI:15377"/>
        <dbReference type="ChEBI" id="CHEBI:28938"/>
        <dbReference type="ChEBI" id="CHEBI:57845"/>
        <dbReference type="ChEBI" id="CHEBI:58126"/>
        <dbReference type="EC" id="2.5.1.61"/>
    </reaction>
</comment>
<comment type="cofactor">
    <cofactor evidence="1">
        <name>dipyrromethane</name>
        <dbReference type="ChEBI" id="CHEBI:60342"/>
    </cofactor>
    <text evidence="1">Binds 1 dipyrromethane group covalently.</text>
</comment>
<comment type="pathway">
    <text evidence="1">Porphyrin-containing compound metabolism; protoporphyrin-IX biosynthesis; coproporphyrinogen-III from 5-aminolevulinate: step 2/4.</text>
</comment>
<comment type="subunit">
    <text evidence="1">Monomer.</text>
</comment>
<comment type="miscellaneous">
    <text evidence="1">The porphobilinogen subunits are added to the dipyrromethane group.</text>
</comment>
<comment type="similarity">
    <text evidence="1">Belongs to the HMBS family.</text>
</comment>
<accession>A8FFV2</accession>
<proteinExistence type="inferred from homology"/>
<reference key="1">
    <citation type="journal article" date="2007" name="PLoS ONE">
        <title>Paradoxical DNA repair and peroxide resistance gene conservation in Bacillus pumilus SAFR-032.</title>
        <authorList>
            <person name="Gioia J."/>
            <person name="Yerrapragada S."/>
            <person name="Qin X."/>
            <person name="Jiang H."/>
            <person name="Igboeli O.C."/>
            <person name="Muzny D."/>
            <person name="Dugan-Rocha S."/>
            <person name="Ding Y."/>
            <person name="Hawes A."/>
            <person name="Liu W."/>
            <person name="Perez L."/>
            <person name="Kovar C."/>
            <person name="Dinh H."/>
            <person name="Lee S."/>
            <person name="Nazareth L."/>
            <person name="Blyth P."/>
            <person name="Holder M."/>
            <person name="Buhay C."/>
            <person name="Tirumalai M.R."/>
            <person name="Liu Y."/>
            <person name="Dasgupta I."/>
            <person name="Bokhetache L."/>
            <person name="Fujita M."/>
            <person name="Karouia F."/>
            <person name="Eswara Moorthy P."/>
            <person name="Siefert J."/>
            <person name="Uzman A."/>
            <person name="Buzumbo P."/>
            <person name="Verma A."/>
            <person name="Zwiya H."/>
            <person name="McWilliams B.D."/>
            <person name="Olowu A."/>
            <person name="Clinkenbeard K.D."/>
            <person name="Newcombe D."/>
            <person name="Golebiewski L."/>
            <person name="Petrosino J.F."/>
            <person name="Nicholson W.L."/>
            <person name="Fox G.E."/>
            <person name="Venkateswaran K."/>
            <person name="Highlander S.K."/>
            <person name="Weinstock G.M."/>
        </authorList>
    </citation>
    <scope>NUCLEOTIDE SEQUENCE [LARGE SCALE GENOMIC DNA]</scope>
    <source>
        <strain>SAFR-032</strain>
    </source>
</reference>
<evidence type="ECO:0000255" key="1">
    <source>
        <dbReference type="HAMAP-Rule" id="MF_00260"/>
    </source>
</evidence>
<protein>
    <recommendedName>
        <fullName evidence="1">Porphobilinogen deaminase</fullName>
        <shortName evidence="1">PBG</shortName>
        <ecNumber evidence="1">2.5.1.61</ecNumber>
    </recommendedName>
    <alternativeName>
        <fullName evidence="1">Hydroxymethylbilane synthase</fullName>
        <shortName evidence="1">HMBS</shortName>
    </alternativeName>
    <alternativeName>
        <fullName evidence="1">Pre-uroporphyrinogen synthase</fullName>
    </alternativeName>
</protein>
<sequence length="311" mass="34239">MRTIKVGSRRSKLAITQTKWVIQKLSELNPSYSFEIKEIVTKGDQILDVTLSKVGGKGLFVKEIEQAMLNHDIDMAVHSMKDMPAALPEGLVIGCIPEREDVRDALISKDHLHLHELPKGAIVGTSSLRRSAQLLQERPDLNIKWIRGNIDTRLEKLKNEEYDAIILAAAGLSRMGWSKEVVSEFLSPETCLPAVGQGALSIECRGDDEELLQLLAQFTNEYTKKTVLAERAFLKQMDGSCQVPIAGYATMNERDEIELTGLVASADGHTIIRETVSGTDPEAIGTACAKQMADKGAKDLIDKVKKDLSSQ</sequence>
<name>HEM3_BACP2</name>
<organism>
    <name type="scientific">Bacillus pumilus (strain SAFR-032)</name>
    <dbReference type="NCBI Taxonomy" id="315750"/>
    <lineage>
        <taxon>Bacteria</taxon>
        <taxon>Bacillati</taxon>
        <taxon>Bacillota</taxon>
        <taxon>Bacilli</taxon>
        <taxon>Bacillales</taxon>
        <taxon>Bacillaceae</taxon>
        <taxon>Bacillus</taxon>
    </lineage>
</organism>
<feature type="chain" id="PRO_1000059094" description="Porphobilinogen deaminase">
    <location>
        <begin position="1"/>
        <end position="311"/>
    </location>
</feature>
<feature type="modified residue" description="S-(dipyrrolylmethanemethyl)cysteine" evidence="1">
    <location>
        <position position="241"/>
    </location>
</feature>
<keyword id="KW-0627">Porphyrin biosynthesis</keyword>
<keyword id="KW-0808">Transferase</keyword>